<sequence>MSITKLADKINEAKAEGRLGLIPFLPGGYPNRDQFWKEILELDEHGADVIEIGMPFSDPVADGPVVEAASLKCLEDGINLKWILAGLSEHRAKISAGVLLMGYYNPVLQYGLEEFAKDASAAGVNGLIIADLPYEEGVEFRDLLAKYDIALIPLVGLNTEADRMALYSKGGNGFCYYVSVLGTTGGTATLPEEIKQGLAKAQEVFDIPVALGFGLKEPSQLKELEGLVDAAVFGSALIKHIDSGKSSAEFMKVWK</sequence>
<comment type="function">
    <text evidence="1">The alpha subunit is responsible for the aldol cleavage of indoleglycerol phosphate to indole and glyceraldehyde 3-phosphate.</text>
</comment>
<comment type="catalytic activity">
    <reaction evidence="1">
        <text>(1S,2R)-1-C-(indol-3-yl)glycerol 3-phosphate + L-serine = D-glyceraldehyde 3-phosphate + L-tryptophan + H2O</text>
        <dbReference type="Rhea" id="RHEA:10532"/>
        <dbReference type="ChEBI" id="CHEBI:15377"/>
        <dbReference type="ChEBI" id="CHEBI:33384"/>
        <dbReference type="ChEBI" id="CHEBI:57912"/>
        <dbReference type="ChEBI" id="CHEBI:58866"/>
        <dbReference type="ChEBI" id="CHEBI:59776"/>
        <dbReference type="EC" id="4.2.1.20"/>
    </reaction>
</comment>
<comment type="pathway">
    <text evidence="1">Amino-acid biosynthesis; L-tryptophan biosynthesis; L-tryptophan from chorismate: step 5/5.</text>
</comment>
<comment type="subunit">
    <text evidence="1">Tetramer of two alpha and two beta chains.</text>
</comment>
<comment type="similarity">
    <text evidence="1">Belongs to the TrpA family.</text>
</comment>
<proteinExistence type="inferred from homology"/>
<name>TRPA_MARSD</name>
<feature type="chain" id="PRO_1000203176" description="Tryptophan synthase alpha chain">
    <location>
        <begin position="1"/>
        <end position="255"/>
    </location>
</feature>
<feature type="active site" description="Proton acceptor" evidence="1">
    <location>
        <position position="51"/>
    </location>
</feature>
<feature type="active site" description="Proton acceptor" evidence="1">
    <location>
        <position position="62"/>
    </location>
</feature>
<accession>C6C1D1</accession>
<protein>
    <recommendedName>
        <fullName evidence="1">Tryptophan synthase alpha chain</fullName>
        <ecNumber evidence="1">4.2.1.20</ecNumber>
    </recommendedName>
</protein>
<organism>
    <name type="scientific">Maridesulfovibrio salexigens (strain ATCC 14822 / DSM 2638 / NCIMB 8403 / VKM B-1763)</name>
    <name type="common">Desulfovibrio salexigens</name>
    <dbReference type="NCBI Taxonomy" id="526222"/>
    <lineage>
        <taxon>Bacteria</taxon>
        <taxon>Pseudomonadati</taxon>
        <taxon>Thermodesulfobacteriota</taxon>
        <taxon>Desulfovibrionia</taxon>
        <taxon>Desulfovibrionales</taxon>
        <taxon>Desulfovibrionaceae</taxon>
        <taxon>Maridesulfovibrio</taxon>
    </lineage>
</organism>
<gene>
    <name evidence="1" type="primary">trpA</name>
    <name type="ordered locus">Desal_3054</name>
</gene>
<keyword id="KW-0028">Amino-acid biosynthesis</keyword>
<keyword id="KW-0057">Aromatic amino acid biosynthesis</keyword>
<keyword id="KW-0456">Lyase</keyword>
<keyword id="KW-1185">Reference proteome</keyword>
<keyword id="KW-0822">Tryptophan biosynthesis</keyword>
<evidence type="ECO:0000255" key="1">
    <source>
        <dbReference type="HAMAP-Rule" id="MF_00131"/>
    </source>
</evidence>
<reference key="1">
    <citation type="submission" date="2009-06" db="EMBL/GenBank/DDBJ databases">
        <title>Complete sequence of Desulfovibrio salexigens DSM 2638.</title>
        <authorList>
            <consortium name="US DOE Joint Genome Institute"/>
            <person name="Lucas S."/>
            <person name="Copeland A."/>
            <person name="Lapidus A."/>
            <person name="Glavina del Rio T."/>
            <person name="Tice H."/>
            <person name="Bruce D."/>
            <person name="Goodwin L."/>
            <person name="Pitluck S."/>
            <person name="Munk A.C."/>
            <person name="Brettin T."/>
            <person name="Detter J.C."/>
            <person name="Han C."/>
            <person name="Tapia R."/>
            <person name="Larimer F."/>
            <person name="Land M."/>
            <person name="Hauser L."/>
            <person name="Kyrpides N."/>
            <person name="Anderson I."/>
            <person name="Wall J.D."/>
            <person name="Arkin A.P."/>
            <person name="Dehal P."/>
            <person name="Chivian D."/>
            <person name="Giles B."/>
            <person name="Hazen T.C."/>
        </authorList>
    </citation>
    <scope>NUCLEOTIDE SEQUENCE [LARGE SCALE GENOMIC DNA]</scope>
    <source>
        <strain>ATCC 14822 / DSM 2638 / NCIMB 8403 / VKM B-1763</strain>
    </source>
</reference>
<dbReference type="EC" id="4.2.1.20" evidence="1"/>
<dbReference type="EMBL" id="CP001649">
    <property type="protein sequence ID" value="ACS81106.1"/>
    <property type="molecule type" value="Genomic_DNA"/>
</dbReference>
<dbReference type="RefSeq" id="WP_015852922.1">
    <property type="nucleotide sequence ID" value="NC_012881.1"/>
</dbReference>
<dbReference type="SMR" id="C6C1D1"/>
<dbReference type="STRING" id="526222.Desal_3054"/>
<dbReference type="KEGG" id="dsa:Desal_3054"/>
<dbReference type="eggNOG" id="COG0159">
    <property type="taxonomic scope" value="Bacteria"/>
</dbReference>
<dbReference type="HOGENOM" id="CLU_016734_0_2_7"/>
<dbReference type="OrthoDB" id="9804578at2"/>
<dbReference type="UniPathway" id="UPA00035">
    <property type="reaction ID" value="UER00044"/>
</dbReference>
<dbReference type="Proteomes" id="UP000002601">
    <property type="component" value="Chromosome"/>
</dbReference>
<dbReference type="GO" id="GO:0005829">
    <property type="term" value="C:cytosol"/>
    <property type="evidence" value="ECO:0007669"/>
    <property type="project" value="TreeGrafter"/>
</dbReference>
<dbReference type="GO" id="GO:0004834">
    <property type="term" value="F:tryptophan synthase activity"/>
    <property type="evidence" value="ECO:0007669"/>
    <property type="project" value="UniProtKB-UniRule"/>
</dbReference>
<dbReference type="CDD" id="cd04724">
    <property type="entry name" value="Tryptophan_synthase_alpha"/>
    <property type="match status" value="1"/>
</dbReference>
<dbReference type="Gene3D" id="3.20.20.70">
    <property type="entry name" value="Aldolase class I"/>
    <property type="match status" value="1"/>
</dbReference>
<dbReference type="HAMAP" id="MF_00131">
    <property type="entry name" value="Trp_synth_alpha"/>
    <property type="match status" value="1"/>
</dbReference>
<dbReference type="InterPro" id="IPR013785">
    <property type="entry name" value="Aldolase_TIM"/>
</dbReference>
<dbReference type="InterPro" id="IPR011060">
    <property type="entry name" value="RibuloseP-bd_barrel"/>
</dbReference>
<dbReference type="InterPro" id="IPR018204">
    <property type="entry name" value="Trp_synthase_alpha_AS"/>
</dbReference>
<dbReference type="InterPro" id="IPR002028">
    <property type="entry name" value="Trp_synthase_suA"/>
</dbReference>
<dbReference type="NCBIfam" id="TIGR00262">
    <property type="entry name" value="trpA"/>
    <property type="match status" value="1"/>
</dbReference>
<dbReference type="PANTHER" id="PTHR43406:SF1">
    <property type="entry name" value="TRYPTOPHAN SYNTHASE ALPHA CHAIN, CHLOROPLASTIC"/>
    <property type="match status" value="1"/>
</dbReference>
<dbReference type="PANTHER" id="PTHR43406">
    <property type="entry name" value="TRYPTOPHAN SYNTHASE, ALPHA CHAIN"/>
    <property type="match status" value="1"/>
</dbReference>
<dbReference type="Pfam" id="PF00290">
    <property type="entry name" value="Trp_syntA"/>
    <property type="match status" value="1"/>
</dbReference>
<dbReference type="SUPFAM" id="SSF51366">
    <property type="entry name" value="Ribulose-phoshate binding barrel"/>
    <property type="match status" value="1"/>
</dbReference>
<dbReference type="PROSITE" id="PS00167">
    <property type="entry name" value="TRP_SYNTHASE_ALPHA"/>
    <property type="match status" value="1"/>
</dbReference>